<organism>
    <name type="scientific">Salmonella agona (strain SL483)</name>
    <dbReference type="NCBI Taxonomy" id="454166"/>
    <lineage>
        <taxon>Bacteria</taxon>
        <taxon>Pseudomonadati</taxon>
        <taxon>Pseudomonadota</taxon>
        <taxon>Gammaproteobacteria</taxon>
        <taxon>Enterobacterales</taxon>
        <taxon>Enterobacteriaceae</taxon>
        <taxon>Salmonella</taxon>
    </lineage>
</organism>
<protein>
    <recommendedName>
        <fullName evidence="1">Small ribosomal subunit protein uS19</fullName>
    </recommendedName>
    <alternativeName>
        <fullName evidence="2">30S ribosomal protein S19</fullName>
    </alternativeName>
</protein>
<name>RS19_SALA4</name>
<comment type="function">
    <text evidence="1">Protein S19 forms a complex with S13 that binds strongly to the 16S ribosomal RNA.</text>
</comment>
<comment type="similarity">
    <text evidence="1">Belongs to the universal ribosomal protein uS19 family.</text>
</comment>
<reference key="1">
    <citation type="journal article" date="2011" name="J. Bacteriol.">
        <title>Comparative genomics of 28 Salmonella enterica isolates: evidence for CRISPR-mediated adaptive sublineage evolution.</title>
        <authorList>
            <person name="Fricke W.F."/>
            <person name="Mammel M.K."/>
            <person name="McDermott P.F."/>
            <person name="Tartera C."/>
            <person name="White D.G."/>
            <person name="Leclerc J.E."/>
            <person name="Ravel J."/>
            <person name="Cebula T.A."/>
        </authorList>
    </citation>
    <scope>NUCLEOTIDE SEQUENCE [LARGE SCALE GENOMIC DNA]</scope>
    <source>
        <strain>SL483</strain>
    </source>
</reference>
<proteinExistence type="inferred from homology"/>
<keyword id="KW-0687">Ribonucleoprotein</keyword>
<keyword id="KW-0689">Ribosomal protein</keyword>
<keyword id="KW-0694">RNA-binding</keyword>
<keyword id="KW-0699">rRNA-binding</keyword>
<gene>
    <name evidence="1" type="primary">rpsS</name>
    <name type="ordered locus">SeAg_B3632</name>
</gene>
<evidence type="ECO:0000255" key="1">
    <source>
        <dbReference type="HAMAP-Rule" id="MF_00531"/>
    </source>
</evidence>
<evidence type="ECO:0000305" key="2"/>
<sequence>MPRSLKKGPFIDLHLLKKVEKAVESGDKKPLRTWSRRSTIFPNMIGLTIAVHNGRQHVPVFVSDEMVGHKLGEFAPTRTYRGHAADKKAKKK</sequence>
<accession>B5F8E8</accession>
<dbReference type="EMBL" id="CP001138">
    <property type="protein sequence ID" value="ACH49470.1"/>
    <property type="molecule type" value="Genomic_DNA"/>
</dbReference>
<dbReference type="RefSeq" id="WP_001138115.1">
    <property type="nucleotide sequence ID" value="NC_011149.1"/>
</dbReference>
<dbReference type="SMR" id="B5F8E8"/>
<dbReference type="GeneID" id="97603665"/>
<dbReference type="KEGG" id="sea:SeAg_B3632"/>
<dbReference type="HOGENOM" id="CLU_144911_0_1_6"/>
<dbReference type="Proteomes" id="UP000008819">
    <property type="component" value="Chromosome"/>
</dbReference>
<dbReference type="GO" id="GO:0005737">
    <property type="term" value="C:cytoplasm"/>
    <property type="evidence" value="ECO:0007669"/>
    <property type="project" value="UniProtKB-ARBA"/>
</dbReference>
<dbReference type="GO" id="GO:0015935">
    <property type="term" value="C:small ribosomal subunit"/>
    <property type="evidence" value="ECO:0007669"/>
    <property type="project" value="InterPro"/>
</dbReference>
<dbReference type="GO" id="GO:0019843">
    <property type="term" value="F:rRNA binding"/>
    <property type="evidence" value="ECO:0007669"/>
    <property type="project" value="UniProtKB-UniRule"/>
</dbReference>
<dbReference type="GO" id="GO:0003735">
    <property type="term" value="F:structural constituent of ribosome"/>
    <property type="evidence" value="ECO:0007669"/>
    <property type="project" value="InterPro"/>
</dbReference>
<dbReference type="GO" id="GO:0000028">
    <property type="term" value="P:ribosomal small subunit assembly"/>
    <property type="evidence" value="ECO:0007669"/>
    <property type="project" value="TreeGrafter"/>
</dbReference>
<dbReference type="GO" id="GO:0006412">
    <property type="term" value="P:translation"/>
    <property type="evidence" value="ECO:0007669"/>
    <property type="project" value="UniProtKB-UniRule"/>
</dbReference>
<dbReference type="FunFam" id="3.30.860.10:FF:000001">
    <property type="entry name" value="30S ribosomal protein S19"/>
    <property type="match status" value="1"/>
</dbReference>
<dbReference type="Gene3D" id="3.30.860.10">
    <property type="entry name" value="30s Ribosomal Protein S19, Chain A"/>
    <property type="match status" value="1"/>
</dbReference>
<dbReference type="HAMAP" id="MF_00531">
    <property type="entry name" value="Ribosomal_uS19"/>
    <property type="match status" value="1"/>
</dbReference>
<dbReference type="InterPro" id="IPR002222">
    <property type="entry name" value="Ribosomal_uS19"/>
</dbReference>
<dbReference type="InterPro" id="IPR005732">
    <property type="entry name" value="Ribosomal_uS19_bac-type"/>
</dbReference>
<dbReference type="InterPro" id="IPR020934">
    <property type="entry name" value="Ribosomal_uS19_CS"/>
</dbReference>
<dbReference type="InterPro" id="IPR023575">
    <property type="entry name" value="Ribosomal_uS19_SF"/>
</dbReference>
<dbReference type="NCBIfam" id="TIGR01050">
    <property type="entry name" value="rpsS_bact"/>
    <property type="match status" value="1"/>
</dbReference>
<dbReference type="PANTHER" id="PTHR11880">
    <property type="entry name" value="RIBOSOMAL PROTEIN S19P FAMILY MEMBER"/>
    <property type="match status" value="1"/>
</dbReference>
<dbReference type="PANTHER" id="PTHR11880:SF8">
    <property type="entry name" value="SMALL RIBOSOMAL SUBUNIT PROTEIN US19M"/>
    <property type="match status" value="1"/>
</dbReference>
<dbReference type="Pfam" id="PF00203">
    <property type="entry name" value="Ribosomal_S19"/>
    <property type="match status" value="1"/>
</dbReference>
<dbReference type="PIRSF" id="PIRSF002144">
    <property type="entry name" value="Ribosomal_S19"/>
    <property type="match status" value="1"/>
</dbReference>
<dbReference type="PRINTS" id="PR00975">
    <property type="entry name" value="RIBOSOMALS19"/>
</dbReference>
<dbReference type="SUPFAM" id="SSF54570">
    <property type="entry name" value="Ribosomal protein S19"/>
    <property type="match status" value="1"/>
</dbReference>
<dbReference type="PROSITE" id="PS00323">
    <property type="entry name" value="RIBOSOMAL_S19"/>
    <property type="match status" value="1"/>
</dbReference>
<feature type="chain" id="PRO_1000128028" description="Small ribosomal subunit protein uS19">
    <location>
        <begin position="1"/>
        <end position="92"/>
    </location>
</feature>